<reference key="1">
    <citation type="journal article" date="2007" name="Nat. Biotechnol.">
        <title>Genome sequence of the lignocellulose-bioconverting and xylose-fermenting yeast Pichia stipitis.</title>
        <authorList>
            <person name="Jeffries T.W."/>
            <person name="Grigoriev I.V."/>
            <person name="Grimwood J."/>
            <person name="Laplaza J.M."/>
            <person name="Aerts A."/>
            <person name="Salamov A."/>
            <person name="Schmutz J."/>
            <person name="Lindquist E."/>
            <person name="Dehal P."/>
            <person name="Shapiro H."/>
            <person name="Jin Y.-S."/>
            <person name="Passoth V."/>
            <person name="Richardson P.M."/>
        </authorList>
    </citation>
    <scope>NUCLEOTIDE SEQUENCE [LARGE SCALE GENOMIC DNA]</scope>
    <source>
        <strain>ATCC 58785 / CBS 6054 / NBRC 10063 / NRRL Y-11545</strain>
    </source>
</reference>
<name>MTNB_PICST</name>
<gene>
    <name evidence="1" type="primary">MDE1</name>
    <name type="ORF">PICST_89976</name>
</gene>
<sequence length="265" mass="29977">MSSSCFCKHSEETPLSVLSPELQEQFSDPNHPANLICELCRLFYDNNWVTGTGGGISIRDVDGANPNLVYIAPSGVQKERIQPWEMFLVELPEEKILRTPNDIPKELTKSYKYKPSACTPLFMSCYTMRDAGACIHTHSQHAVMVTLFLEGKKEFEISHIEQIKALPKLALNENTGKIEKIGSMEYYDKLVIPIIENTPHEEDLTDSLQEAIKNYPGTSAVLVRRHGIYVWGETVWKAKVYNEAIDYLLELAVKMQQSGIPTVKQ</sequence>
<dbReference type="EC" id="4.2.1.109" evidence="1"/>
<dbReference type="EMBL" id="CP000499">
    <property type="protein sequence ID" value="ABN67149.2"/>
    <property type="molecule type" value="Genomic_DNA"/>
</dbReference>
<dbReference type="SMR" id="A3LVM9"/>
<dbReference type="FunCoup" id="A3LVM9">
    <property type="interactions" value="254"/>
</dbReference>
<dbReference type="STRING" id="322104.A3LVM9"/>
<dbReference type="KEGG" id="pic:PICST_89976"/>
<dbReference type="eggNOG" id="KOG2631">
    <property type="taxonomic scope" value="Eukaryota"/>
</dbReference>
<dbReference type="HOGENOM" id="CLU_006033_4_0_1"/>
<dbReference type="InParanoid" id="A3LVM9"/>
<dbReference type="OMA" id="WFPGTSG"/>
<dbReference type="OrthoDB" id="191080at2759"/>
<dbReference type="UniPathway" id="UPA00904">
    <property type="reaction ID" value="UER00875"/>
</dbReference>
<dbReference type="Proteomes" id="UP000002258">
    <property type="component" value="Chromosome 5"/>
</dbReference>
<dbReference type="GO" id="GO:0005737">
    <property type="term" value="C:cytoplasm"/>
    <property type="evidence" value="ECO:0007669"/>
    <property type="project" value="UniProtKB-SubCell"/>
</dbReference>
<dbReference type="GO" id="GO:0046570">
    <property type="term" value="F:methylthioribulose 1-phosphate dehydratase activity"/>
    <property type="evidence" value="ECO:0007669"/>
    <property type="project" value="UniProtKB-UniRule"/>
</dbReference>
<dbReference type="GO" id="GO:0008270">
    <property type="term" value="F:zinc ion binding"/>
    <property type="evidence" value="ECO:0007669"/>
    <property type="project" value="UniProtKB-UniRule"/>
</dbReference>
<dbReference type="GO" id="GO:0019509">
    <property type="term" value="P:L-methionine salvage from methylthioadenosine"/>
    <property type="evidence" value="ECO:0007669"/>
    <property type="project" value="UniProtKB-UniRule"/>
</dbReference>
<dbReference type="FunFam" id="3.40.225.10:FF:000003">
    <property type="entry name" value="Methylthioribulose-1-phosphate dehydratase"/>
    <property type="match status" value="1"/>
</dbReference>
<dbReference type="Gene3D" id="3.40.225.10">
    <property type="entry name" value="Class II aldolase/adducin N-terminal domain"/>
    <property type="match status" value="1"/>
</dbReference>
<dbReference type="HAMAP" id="MF_03116">
    <property type="entry name" value="Salvage_MtnB_euk"/>
    <property type="match status" value="1"/>
</dbReference>
<dbReference type="InterPro" id="IPR001303">
    <property type="entry name" value="Aldolase_II/adducin_N"/>
</dbReference>
<dbReference type="InterPro" id="IPR036409">
    <property type="entry name" value="Aldolase_II/adducin_N_sf"/>
</dbReference>
<dbReference type="InterPro" id="IPR017714">
    <property type="entry name" value="MethylthioRu-1-P_deHdtase_MtnB"/>
</dbReference>
<dbReference type="InterPro" id="IPR027514">
    <property type="entry name" value="Salvage_MtnB_euk"/>
</dbReference>
<dbReference type="NCBIfam" id="TIGR03328">
    <property type="entry name" value="salvage_mtnB"/>
    <property type="match status" value="1"/>
</dbReference>
<dbReference type="PANTHER" id="PTHR10640">
    <property type="entry name" value="METHYLTHIORIBULOSE-1-PHOSPHATE DEHYDRATASE"/>
    <property type="match status" value="1"/>
</dbReference>
<dbReference type="PANTHER" id="PTHR10640:SF7">
    <property type="entry name" value="METHYLTHIORIBULOSE-1-PHOSPHATE DEHYDRATASE"/>
    <property type="match status" value="1"/>
</dbReference>
<dbReference type="Pfam" id="PF00596">
    <property type="entry name" value="Aldolase_II"/>
    <property type="match status" value="1"/>
</dbReference>
<dbReference type="SMART" id="SM01007">
    <property type="entry name" value="Aldolase_II"/>
    <property type="match status" value="1"/>
</dbReference>
<dbReference type="SUPFAM" id="SSF53639">
    <property type="entry name" value="AraD/HMP-PK domain-like"/>
    <property type="match status" value="1"/>
</dbReference>
<feature type="chain" id="PRO_0000393842" description="Methylthioribulose-1-phosphate dehydratase">
    <location>
        <begin position="1"/>
        <end position="265"/>
    </location>
</feature>
<feature type="active site" description="Proton donor/acceptor" evidence="1">
    <location>
        <position position="161"/>
    </location>
</feature>
<feature type="binding site" evidence="1">
    <location>
        <position position="118"/>
    </location>
    <ligand>
        <name>substrate</name>
    </ligand>
</feature>
<feature type="binding site" evidence="1">
    <location>
        <position position="136"/>
    </location>
    <ligand>
        <name>Zn(2+)</name>
        <dbReference type="ChEBI" id="CHEBI:29105"/>
    </ligand>
</feature>
<feature type="binding site" evidence="1">
    <location>
        <position position="138"/>
    </location>
    <ligand>
        <name>Zn(2+)</name>
        <dbReference type="ChEBI" id="CHEBI:29105"/>
    </ligand>
</feature>
<feature type="binding site" evidence="1">
    <location>
        <position position="226"/>
    </location>
    <ligand>
        <name>Zn(2+)</name>
        <dbReference type="ChEBI" id="CHEBI:29105"/>
    </ligand>
</feature>
<protein>
    <recommendedName>
        <fullName evidence="1">Methylthioribulose-1-phosphate dehydratase</fullName>
        <shortName evidence="1">MTRu-1-P dehydratase</shortName>
        <ecNumber evidence="1">4.2.1.109</ecNumber>
    </recommendedName>
</protein>
<keyword id="KW-0028">Amino-acid biosynthesis</keyword>
<keyword id="KW-0963">Cytoplasm</keyword>
<keyword id="KW-0456">Lyase</keyword>
<keyword id="KW-0479">Metal-binding</keyword>
<keyword id="KW-0486">Methionine biosynthesis</keyword>
<keyword id="KW-1185">Reference proteome</keyword>
<keyword id="KW-0862">Zinc</keyword>
<comment type="function">
    <text evidence="1">Catalyzes the dehydration of methylthioribulose-1-phosphate (MTRu-1-P) into 2,3-diketo-5-methylthiopentyl-1-phosphate (DK-MTP-1-P).</text>
</comment>
<comment type="catalytic activity">
    <reaction evidence="1">
        <text>5-(methylsulfanyl)-D-ribulose 1-phosphate = 5-methylsulfanyl-2,3-dioxopentyl phosphate + H2O</text>
        <dbReference type="Rhea" id="RHEA:15549"/>
        <dbReference type="ChEBI" id="CHEBI:15377"/>
        <dbReference type="ChEBI" id="CHEBI:58548"/>
        <dbReference type="ChEBI" id="CHEBI:58828"/>
        <dbReference type="EC" id="4.2.1.109"/>
    </reaction>
</comment>
<comment type="cofactor">
    <cofactor evidence="1">
        <name>Zn(2+)</name>
        <dbReference type="ChEBI" id="CHEBI:29105"/>
    </cofactor>
    <text evidence="1">Binds 1 zinc ion per subunit.</text>
</comment>
<comment type="pathway">
    <text evidence="1">Amino-acid biosynthesis; L-methionine biosynthesis via salvage pathway; L-methionine from S-methyl-5-thio-alpha-D-ribose 1-phosphate: step 2/6.</text>
</comment>
<comment type="subcellular location">
    <subcellularLocation>
        <location evidence="1">Cytoplasm</location>
    </subcellularLocation>
</comment>
<comment type="similarity">
    <text evidence="1">Belongs to the aldolase class II family. MtnB subfamily.</text>
</comment>
<organism>
    <name type="scientific">Scheffersomyces stipitis (strain ATCC 58785 / CBS 6054 / NBRC 10063 / NRRL Y-11545)</name>
    <name type="common">Yeast</name>
    <name type="synonym">Pichia stipitis</name>
    <dbReference type="NCBI Taxonomy" id="322104"/>
    <lineage>
        <taxon>Eukaryota</taxon>
        <taxon>Fungi</taxon>
        <taxon>Dikarya</taxon>
        <taxon>Ascomycota</taxon>
        <taxon>Saccharomycotina</taxon>
        <taxon>Pichiomycetes</taxon>
        <taxon>Debaryomycetaceae</taxon>
        <taxon>Scheffersomyces</taxon>
    </lineage>
</organism>
<proteinExistence type="inferred from homology"/>
<accession>A3LVM9</accession>
<evidence type="ECO:0000255" key="1">
    <source>
        <dbReference type="HAMAP-Rule" id="MF_03116"/>
    </source>
</evidence>